<organism>
    <name type="scientific">Staphylococcus epidermidis (strain ATCC 12228 / FDA PCI 1200)</name>
    <dbReference type="NCBI Taxonomy" id="176280"/>
    <lineage>
        <taxon>Bacteria</taxon>
        <taxon>Bacillati</taxon>
        <taxon>Bacillota</taxon>
        <taxon>Bacilli</taxon>
        <taxon>Bacillales</taxon>
        <taxon>Staphylococcaceae</taxon>
        <taxon>Staphylococcus</taxon>
    </lineage>
</organism>
<feature type="chain" id="PRO_0000176583" description="Transcription antitermination protein NusB">
    <location>
        <begin position="1"/>
        <end position="129"/>
    </location>
</feature>
<sequence>MSRKDARVQAFQTLFQLEIKETDLTIQEAIEFIKDDHSDLDFDFIYWLVTGVKDHQIVLDETIKPHLKDWSIDRLLKSDRIILRMATFEILHSDTPKKVVVNEAVELTKQFSDDDHYKFVNGVLSNIND</sequence>
<evidence type="ECO:0000255" key="1">
    <source>
        <dbReference type="HAMAP-Rule" id="MF_00073"/>
    </source>
</evidence>
<name>NUSB_STAES</name>
<dbReference type="EMBL" id="AE015929">
    <property type="protein sequence ID" value="AAO04804.1"/>
    <property type="molecule type" value="Genomic_DNA"/>
</dbReference>
<dbReference type="RefSeq" id="NP_764760.1">
    <property type="nucleotide sequence ID" value="NC_004461.1"/>
</dbReference>
<dbReference type="RefSeq" id="WP_001831090.1">
    <property type="nucleotide sequence ID" value="NZ_WBME01000006.1"/>
</dbReference>
<dbReference type="SMR" id="Q8CP37"/>
<dbReference type="GeneID" id="50018677"/>
<dbReference type="KEGG" id="sep:SE_1205"/>
<dbReference type="PATRIC" id="fig|176280.10.peg.1175"/>
<dbReference type="eggNOG" id="COG0781">
    <property type="taxonomic scope" value="Bacteria"/>
</dbReference>
<dbReference type="HOGENOM" id="CLU_087843_3_3_9"/>
<dbReference type="OrthoDB" id="9811381at2"/>
<dbReference type="Proteomes" id="UP000001411">
    <property type="component" value="Chromosome"/>
</dbReference>
<dbReference type="GO" id="GO:0005829">
    <property type="term" value="C:cytosol"/>
    <property type="evidence" value="ECO:0007669"/>
    <property type="project" value="TreeGrafter"/>
</dbReference>
<dbReference type="GO" id="GO:0003723">
    <property type="term" value="F:RNA binding"/>
    <property type="evidence" value="ECO:0007669"/>
    <property type="project" value="UniProtKB-UniRule"/>
</dbReference>
<dbReference type="GO" id="GO:0006353">
    <property type="term" value="P:DNA-templated transcription termination"/>
    <property type="evidence" value="ECO:0007669"/>
    <property type="project" value="UniProtKB-UniRule"/>
</dbReference>
<dbReference type="GO" id="GO:0031564">
    <property type="term" value="P:transcription antitermination"/>
    <property type="evidence" value="ECO:0007669"/>
    <property type="project" value="UniProtKB-KW"/>
</dbReference>
<dbReference type="Gene3D" id="1.10.940.10">
    <property type="entry name" value="NusB-like"/>
    <property type="match status" value="1"/>
</dbReference>
<dbReference type="HAMAP" id="MF_00073">
    <property type="entry name" value="NusB"/>
    <property type="match status" value="1"/>
</dbReference>
<dbReference type="InterPro" id="IPR035926">
    <property type="entry name" value="NusB-like_sf"/>
</dbReference>
<dbReference type="InterPro" id="IPR011605">
    <property type="entry name" value="NusB_fam"/>
</dbReference>
<dbReference type="InterPro" id="IPR006027">
    <property type="entry name" value="NusB_RsmB_TIM44"/>
</dbReference>
<dbReference type="NCBIfam" id="TIGR01951">
    <property type="entry name" value="nusB"/>
    <property type="match status" value="1"/>
</dbReference>
<dbReference type="PANTHER" id="PTHR11078:SF3">
    <property type="entry name" value="ANTITERMINATION NUSB DOMAIN-CONTAINING PROTEIN"/>
    <property type="match status" value="1"/>
</dbReference>
<dbReference type="PANTHER" id="PTHR11078">
    <property type="entry name" value="N UTILIZATION SUBSTANCE PROTEIN B-RELATED"/>
    <property type="match status" value="1"/>
</dbReference>
<dbReference type="Pfam" id="PF01029">
    <property type="entry name" value="NusB"/>
    <property type="match status" value="1"/>
</dbReference>
<dbReference type="SUPFAM" id="SSF48013">
    <property type="entry name" value="NusB-like"/>
    <property type="match status" value="1"/>
</dbReference>
<accession>Q8CP37</accession>
<gene>
    <name evidence="1" type="primary">nusB</name>
    <name type="ordered locus">SE_1205</name>
</gene>
<protein>
    <recommendedName>
        <fullName evidence="1">Transcription antitermination protein NusB</fullName>
    </recommendedName>
    <alternativeName>
        <fullName evidence="1">Antitermination factor NusB</fullName>
    </alternativeName>
</protein>
<keyword id="KW-0694">RNA-binding</keyword>
<keyword id="KW-0804">Transcription</keyword>
<keyword id="KW-0889">Transcription antitermination</keyword>
<keyword id="KW-0805">Transcription regulation</keyword>
<comment type="function">
    <text evidence="1">Involved in transcription antitermination. Required for transcription of ribosomal RNA (rRNA) genes. Binds specifically to the boxA antiterminator sequence of the ribosomal RNA (rrn) operons.</text>
</comment>
<comment type="similarity">
    <text evidence="1">Belongs to the NusB family.</text>
</comment>
<reference key="1">
    <citation type="journal article" date="2003" name="Mol. Microbiol.">
        <title>Genome-based analysis of virulence genes in a non-biofilm-forming Staphylococcus epidermidis strain (ATCC 12228).</title>
        <authorList>
            <person name="Zhang Y.-Q."/>
            <person name="Ren S.-X."/>
            <person name="Li H.-L."/>
            <person name="Wang Y.-X."/>
            <person name="Fu G."/>
            <person name="Yang J."/>
            <person name="Qin Z.-Q."/>
            <person name="Miao Y.-G."/>
            <person name="Wang W.-Y."/>
            <person name="Chen R.-S."/>
            <person name="Shen Y."/>
            <person name="Chen Z."/>
            <person name="Yuan Z.-H."/>
            <person name="Zhao G.-P."/>
            <person name="Qu D."/>
            <person name="Danchin A."/>
            <person name="Wen Y.-M."/>
        </authorList>
    </citation>
    <scope>NUCLEOTIDE SEQUENCE [LARGE SCALE GENOMIC DNA]</scope>
    <source>
        <strain>ATCC 12228 / FDA PCI 1200</strain>
    </source>
</reference>
<proteinExistence type="inferred from homology"/>